<sequence>MGTDGDRAKAVDLAISQIERQFGKGSIMRLGAKERIEDIAVIPTGALSLDIALGIGGVPRGRIIEIFGPESGGKTTLALHIIAEAQKRNGLAAFIDAEHALDVSYARKIGVNTDDLLISQPDTGEQALEIAETLVRSGALDILVVDSVAALVPKAEIEGEMGDAQMGLQARLMSQALRKLTGSISKSNTTVIFINQLRMKIGVFFGNPETTTGGNALKFYASMRLDIRKSGSIKSGQDVIGMRTKVKVVKNKVAPPFRETEFDILFGEGISKAGDILDLAAESGIVEKSGAWYSYGGERIGQGRDNTRNFLKEHPDILVRIEEQVRSEHGLKPRLQEQEEPAK</sequence>
<comment type="function">
    <text evidence="1">Can catalyze the hydrolysis of ATP in the presence of single-stranded DNA, the ATP-dependent uptake of single-stranded DNA by duplex DNA, and the ATP-dependent hybridization of homologous single-stranded DNAs. It interacts with LexA causing its activation and leading to its autocatalytic cleavage.</text>
</comment>
<comment type="subcellular location">
    <subcellularLocation>
        <location evidence="1">Cytoplasm</location>
    </subcellularLocation>
</comment>
<comment type="similarity">
    <text evidence="1">Belongs to the RecA family.</text>
</comment>
<dbReference type="EMBL" id="CP000252">
    <property type="protein sequence ID" value="ABC76221.1"/>
    <property type="molecule type" value="Genomic_DNA"/>
</dbReference>
<dbReference type="RefSeq" id="WP_011416255.1">
    <property type="nucleotide sequence ID" value="NC_007759.1"/>
</dbReference>
<dbReference type="SMR" id="Q2LPL5"/>
<dbReference type="FunCoup" id="Q2LPL5">
    <property type="interactions" value="463"/>
</dbReference>
<dbReference type="STRING" id="56780.SYN_02028"/>
<dbReference type="KEGG" id="sat:SYN_02028"/>
<dbReference type="eggNOG" id="COG0468">
    <property type="taxonomic scope" value="Bacteria"/>
</dbReference>
<dbReference type="HOGENOM" id="CLU_040469_1_2_7"/>
<dbReference type="InParanoid" id="Q2LPL5"/>
<dbReference type="OrthoDB" id="9776733at2"/>
<dbReference type="Proteomes" id="UP000001933">
    <property type="component" value="Chromosome"/>
</dbReference>
<dbReference type="GO" id="GO:0005829">
    <property type="term" value="C:cytosol"/>
    <property type="evidence" value="ECO:0007669"/>
    <property type="project" value="TreeGrafter"/>
</dbReference>
<dbReference type="GO" id="GO:0005524">
    <property type="term" value="F:ATP binding"/>
    <property type="evidence" value="ECO:0007669"/>
    <property type="project" value="UniProtKB-UniRule"/>
</dbReference>
<dbReference type="GO" id="GO:0016887">
    <property type="term" value="F:ATP hydrolysis activity"/>
    <property type="evidence" value="ECO:0007669"/>
    <property type="project" value="InterPro"/>
</dbReference>
<dbReference type="GO" id="GO:0140664">
    <property type="term" value="F:ATP-dependent DNA damage sensor activity"/>
    <property type="evidence" value="ECO:0007669"/>
    <property type="project" value="InterPro"/>
</dbReference>
<dbReference type="GO" id="GO:0003684">
    <property type="term" value="F:damaged DNA binding"/>
    <property type="evidence" value="ECO:0007669"/>
    <property type="project" value="UniProtKB-UniRule"/>
</dbReference>
<dbReference type="GO" id="GO:0003697">
    <property type="term" value="F:single-stranded DNA binding"/>
    <property type="evidence" value="ECO:0007669"/>
    <property type="project" value="UniProtKB-UniRule"/>
</dbReference>
<dbReference type="GO" id="GO:0006310">
    <property type="term" value="P:DNA recombination"/>
    <property type="evidence" value="ECO:0007669"/>
    <property type="project" value="UniProtKB-UniRule"/>
</dbReference>
<dbReference type="GO" id="GO:0006281">
    <property type="term" value="P:DNA repair"/>
    <property type="evidence" value="ECO:0007669"/>
    <property type="project" value="UniProtKB-UniRule"/>
</dbReference>
<dbReference type="GO" id="GO:0009432">
    <property type="term" value="P:SOS response"/>
    <property type="evidence" value="ECO:0007669"/>
    <property type="project" value="UniProtKB-UniRule"/>
</dbReference>
<dbReference type="CDD" id="cd00983">
    <property type="entry name" value="RecA"/>
    <property type="match status" value="1"/>
</dbReference>
<dbReference type="FunFam" id="3.40.50.300:FF:000087">
    <property type="entry name" value="Recombinase RecA"/>
    <property type="match status" value="1"/>
</dbReference>
<dbReference type="Gene3D" id="3.40.50.300">
    <property type="entry name" value="P-loop containing nucleotide triphosphate hydrolases"/>
    <property type="match status" value="1"/>
</dbReference>
<dbReference type="HAMAP" id="MF_00268">
    <property type="entry name" value="RecA"/>
    <property type="match status" value="1"/>
</dbReference>
<dbReference type="InterPro" id="IPR003593">
    <property type="entry name" value="AAA+_ATPase"/>
</dbReference>
<dbReference type="InterPro" id="IPR013765">
    <property type="entry name" value="DNA_recomb/repair_RecA"/>
</dbReference>
<dbReference type="InterPro" id="IPR020584">
    <property type="entry name" value="DNA_recomb/repair_RecA_CS"/>
</dbReference>
<dbReference type="InterPro" id="IPR027417">
    <property type="entry name" value="P-loop_NTPase"/>
</dbReference>
<dbReference type="InterPro" id="IPR049261">
    <property type="entry name" value="RecA-like_C"/>
</dbReference>
<dbReference type="InterPro" id="IPR049428">
    <property type="entry name" value="RecA-like_N"/>
</dbReference>
<dbReference type="InterPro" id="IPR020588">
    <property type="entry name" value="RecA_ATP-bd"/>
</dbReference>
<dbReference type="InterPro" id="IPR023400">
    <property type="entry name" value="RecA_C_sf"/>
</dbReference>
<dbReference type="InterPro" id="IPR020587">
    <property type="entry name" value="RecA_monomer-monomer_interface"/>
</dbReference>
<dbReference type="NCBIfam" id="TIGR02012">
    <property type="entry name" value="tigrfam_recA"/>
    <property type="match status" value="1"/>
</dbReference>
<dbReference type="PANTHER" id="PTHR45900:SF1">
    <property type="entry name" value="MITOCHONDRIAL DNA REPAIR PROTEIN RECA HOMOLOG-RELATED"/>
    <property type="match status" value="1"/>
</dbReference>
<dbReference type="PANTHER" id="PTHR45900">
    <property type="entry name" value="RECA"/>
    <property type="match status" value="1"/>
</dbReference>
<dbReference type="Pfam" id="PF00154">
    <property type="entry name" value="RecA"/>
    <property type="match status" value="1"/>
</dbReference>
<dbReference type="Pfam" id="PF21096">
    <property type="entry name" value="RecA_C"/>
    <property type="match status" value="1"/>
</dbReference>
<dbReference type="PRINTS" id="PR00142">
    <property type="entry name" value="RECA"/>
</dbReference>
<dbReference type="SMART" id="SM00382">
    <property type="entry name" value="AAA"/>
    <property type="match status" value="1"/>
</dbReference>
<dbReference type="SUPFAM" id="SSF52540">
    <property type="entry name" value="P-loop containing nucleoside triphosphate hydrolases"/>
    <property type="match status" value="1"/>
</dbReference>
<dbReference type="SUPFAM" id="SSF54752">
    <property type="entry name" value="RecA protein, C-terminal domain"/>
    <property type="match status" value="1"/>
</dbReference>
<dbReference type="PROSITE" id="PS00321">
    <property type="entry name" value="RECA_1"/>
    <property type="match status" value="1"/>
</dbReference>
<dbReference type="PROSITE" id="PS50162">
    <property type="entry name" value="RECA_2"/>
    <property type="match status" value="1"/>
</dbReference>
<dbReference type="PROSITE" id="PS50163">
    <property type="entry name" value="RECA_3"/>
    <property type="match status" value="1"/>
</dbReference>
<reference key="1">
    <citation type="journal article" date="2007" name="Proc. Natl. Acad. Sci. U.S.A.">
        <title>The genome of Syntrophus aciditrophicus: life at the thermodynamic limit of microbial growth.</title>
        <authorList>
            <person name="McInerney M.J."/>
            <person name="Rohlin L."/>
            <person name="Mouttaki H."/>
            <person name="Kim U."/>
            <person name="Krupp R.S."/>
            <person name="Rios-Hernandez L."/>
            <person name="Sieber J."/>
            <person name="Struchtemeyer C.G."/>
            <person name="Bhattacharyya A."/>
            <person name="Campbell J.W."/>
            <person name="Gunsalus R.P."/>
        </authorList>
    </citation>
    <scope>NUCLEOTIDE SEQUENCE [LARGE SCALE GENOMIC DNA]</scope>
    <source>
        <strain>SB</strain>
    </source>
</reference>
<accession>Q2LPL5</accession>
<keyword id="KW-0067">ATP-binding</keyword>
<keyword id="KW-0963">Cytoplasm</keyword>
<keyword id="KW-0227">DNA damage</keyword>
<keyword id="KW-0233">DNA recombination</keyword>
<keyword id="KW-0234">DNA repair</keyword>
<keyword id="KW-0238">DNA-binding</keyword>
<keyword id="KW-0547">Nucleotide-binding</keyword>
<keyword id="KW-1185">Reference proteome</keyword>
<keyword id="KW-0742">SOS response</keyword>
<evidence type="ECO:0000255" key="1">
    <source>
        <dbReference type="HAMAP-Rule" id="MF_00268"/>
    </source>
</evidence>
<gene>
    <name evidence="1" type="primary">recA</name>
    <name type="ordered locus">SYNAS_03420</name>
    <name type="ORF">SYN_02028</name>
</gene>
<organism>
    <name type="scientific">Syntrophus aciditrophicus (strain SB)</name>
    <dbReference type="NCBI Taxonomy" id="56780"/>
    <lineage>
        <taxon>Bacteria</taxon>
        <taxon>Pseudomonadati</taxon>
        <taxon>Thermodesulfobacteriota</taxon>
        <taxon>Syntrophia</taxon>
        <taxon>Syntrophales</taxon>
        <taxon>Syntrophaceae</taxon>
        <taxon>Syntrophus</taxon>
    </lineage>
</organism>
<proteinExistence type="inferred from homology"/>
<protein>
    <recommendedName>
        <fullName evidence="1">Protein RecA</fullName>
    </recommendedName>
    <alternativeName>
        <fullName evidence="1">Recombinase A</fullName>
    </alternativeName>
</protein>
<feature type="chain" id="PRO_1000048020" description="Protein RecA">
    <location>
        <begin position="1"/>
        <end position="343"/>
    </location>
</feature>
<feature type="binding site" evidence="1">
    <location>
        <begin position="68"/>
        <end position="75"/>
    </location>
    <ligand>
        <name>ATP</name>
        <dbReference type="ChEBI" id="CHEBI:30616"/>
    </ligand>
</feature>
<name>RECA_SYNAS</name>